<comment type="function">
    <text evidence="1">Required for stress adaptation, morphogenesis and virulence.</text>
</comment>
<proteinExistence type="inferred from homology"/>
<evidence type="ECO:0000250" key="1"/>
<evidence type="ECO:0000255" key="2">
    <source>
        <dbReference type="PROSITE-ProRule" id="PRU00169"/>
    </source>
</evidence>
<evidence type="ECO:0000256" key="3">
    <source>
        <dbReference type="SAM" id="MobiDB-lite"/>
    </source>
</evidence>
<reference key="1">
    <citation type="journal article" date="2009" name="Nature">
        <title>Evolution of pathogenicity and sexual reproduction in eight Candida genomes.</title>
        <authorList>
            <person name="Butler G."/>
            <person name="Rasmussen M.D."/>
            <person name="Lin M.F."/>
            <person name="Santos M.A.S."/>
            <person name="Sakthikumar S."/>
            <person name="Munro C.A."/>
            <person name="Rheinbay E."/>
            <person name="Grabherr M."/>
            <person name="Forche A."/>
            <person name="Reedy J.L."/>
            <person name="Agrafioti I."/>
            <person name="Arnaud M.B."/>
            <person name="Bates S."/>
            <person name="Brown A.J.P."/>
            <person name="Brunke S."/>
            <person name="Costanzo M.C."/>
            <person name="Fitzpatrick D.A."/>
            <person name="de Groot P.W.J."/>
            <person name="Harris D."/>
            <person name="Hoyer L.L."/>
            <person name="Hube B."/>
            <person name="Klis F.M."/>
            <person name="Kodira C."/>
            <person name="Lennard N."/>
            <person name="Logue M.E."/>
            <person name="Martin R."/>
            <person name="Neiman A.M."/>
            <person name="Nikolaou E."/>
            <person name="Quail M.A."/>
            <person name="Quinn J."/>
            <person name="Santos M.C."/>
            <person name="Schmitzberger F.F."/>
            <person name="Sherlock G."/>
            <person name="Shah P."/>
            <person name="Silverstein K.A.T."/>
            <person name="Skrzypek M.S."/>
            <person name="Soll D."/>
            <person name="Staggs R."/>
            <person name="Stansfield I."/>
            <person name="Stumpf M.P.H."/>
            <person name="Sudbery P.E."/>
            <person name="Srikantha T."/>
            <person name="Zeng Q."/>
            <person name="Berman J."/>
            <person name="Berriman M."/>
            <person name="Heitman J."/>
            <person name="Gow N.A.R."/>
            <person name="Lorenz M.C."/>
            <person name="Birren B.W."/>
            <person name="Kellis M."/>
            <person name="Cuomo C.A."/>
        </authorList>
    </citation>
    <scope>NUCLEOTIDE SEQUENCE [LARGE SCALE GENOMIC DNA]</scope>
    <source>
        <strain>WO-1</strain>
    </source>
</reference>
<dbReference type="EMBL" id="CM000309">
    <property type="protein sequence ID" value="EEQ43638.1"/>
    <property type="molecule type" value="Genomic_DNA"/>
</dbReference>
<dbReference type="SMR" id="C4YM07"/>
<dbReference type="PaxDb" id="5476-C4YM07"/>
<dbReference type="VEuPathDB" id="FungiDB:CAWG_01882"/>
<dbReference type="HOGENOM" id="CLU_065405_0_0_1"/>
<dbReference type="OMA" id="FHKPLNY"/>
<dbReference type="OrthoDB" id="25448at766764"/>
<dbReference type="Proteomes" id="UP000001429">
    <property type="component" value="Chromosome R"/>
</dbReference>
<dbReference type="GO" id="GO:0036180">
    <property type="term" value="P:filamentous growth of a population of unicellular organisms in response to biotic stimulus"/>
    <property type="evidence" value="ECO:0007669"/>
    <property type="project" value="UniProtKB-ARBA"/>
</dbReference>
<dbReference type="GO" id="GO:0000160">
    <property type="term" value="P:phosphorelay signal transduction system"/>
    <property type="evidence" value="ECO:0007669"/>
    <property type="project" value="InterPro"/>
</dbReference>
<dbReference type="GO" id="GO:1900445">
    <property type="term" value="P:positive regulation of filamentous growth of a population of unicellular organisms in response to biotic stimulus"/>
    <property type="evidence" value="ECO:0007669"/>
    <property type="project" value="UniProtKB-ARBA"/>
</dbReference>
<dbReference type="CDD" id="cd17546">
    <property type="entry name" value="REC_hyHK_CKI1_RcsC-like"/>
    <property type="match status" value="1"/>
</dbReference>
<dbReference type="Gene3D" id="3.40.50.2300">
    <property type="match status" value="1"/>
</dbReference>
<dbReference type="InterPro" id="IPR050595">
    <property type="entry name" value="Bact_response_regulator"/>
</dbReference>
<dbReference type="InterPro" id="IPR011006">
    <property type="entry name" value="CheY-like_superfamily"/>
</dbReference>
<dbReference type="InterPro" id="IPR001789">
    <property type="entry name" value="Sig_transdc_resp-reg_receiver"/>
</dbReference>
<dbReference type="PANTHER" id="PTHR44591:SF3">
    <property type="entry name" value="RESPONSE REGULATORY DOMAIN-CONTAINING PROTEIN"/>
    <property type="match status" value="1"/>
</dbReference>
<dbReference type="PANTHER" id="PTHR44591">
    <property type="entry name" value="STRESS RESPONSE REGULATOR PROTEIN 1"/>
    <property type="match status" value="1"/>
</dbReference>
<dbReference type="Pfam" id="PF00072">
    <property type="entry name" value="Response_reg"/>
    <property type="match status" value="1"/>
</dbReference>
<dbReference type="SMART" id="SM00448">
    <property type="entry name" value="REC"/>
    <property type="match status" value="1"/>
</dbReference>
<dbReference type="SUPFAM" id="SSF52172">
    <property type="entry name" value="CheY-like"/>
    <property type="match status" value="1"/>
</dbReference>
<dbReference type="PROSITE" id="PS50110">
    <property type="entry name" value="RESPONSE_REGULATORY"/>
    <property type="match status" value="1"/>
</dbReference>
<feature type="chain" id="PRO_0000413386" description="Stress response regulator protein 1">
    <location>
        <begin position="1"/>
        <end position="282"/>
    </location>
</feature>
<feature type="domain" description="Response regulatory" evidence="2">
    <location>
        <begin position="155"/>
        <end position="273"/>
    </location>
</feature>
<feature type="region of interest" description="Disordered" evidence="3">
    <location>
        <begin position="12"/>
        <end position="31"/>
    </location>
</feature>
<feature type="region of interest" description="Disordered" evidence="3">
    <location>
        <begin position="41"/>
        <end position="84"/>
    </location>
</feature>
<feature type="region of interest" description="Disordered" evidence="3">
    <location>
        <begin position="112"/>
        <end position="139"/>
    </location>
</feature>
<feature type="compositionally biased region" description="Low complexity" evidence="3">
    <location>
        <begin position="12"/>
        <end position="30"/>
    </location>
</feature>
<feature type="compositionally biased region" description="Low complexity" evidence="3">
    <location>
        <begin position="41"/>
        <end position="58"/>
    </location>
</feature>
<feature type="compositionally biased region" description="Polar residues" evidence="3">
    <location>
        <begin position="66"/>
        <end position="77"/>
    </location>
</feature>
<feature type="compositionally biased region" description="Low complexity" evidence="3">
    <location>
        <begin position="125"/>
        <end position="139"/>
    </location>
</feature>
<feature type="modified residue" description="4-aspartylphosphate" evidence="2">
    <location>
        <position position="206"/>
    </location>
</feature>
<organism>
    <name type="scientific">Candida albicans (strain WO-1)</name>
    <name type="common">Yeast</name>
    <dbReference type="NCBI Taxonomy" id="294748"/>
    <lineage>
        <taxon>Eukaryota</taxon>
        <taxon>Fungi</taxon>
        <taxon>Dikarya</taxon>
        <taxon>Ascomycota</taxon>
        <taxon>Saccharomycotina</taxon>
        <taxon>Pichiomycetes</taxon>
        <taxon>Debaryomycetaceae</taxon>
        <taxon>Candida/Lodderomyces clade</taxon>
        <taxon>Candida</taxon>
    </lineage>
</organism>
<sequence length="282" mass="32127">MISMNPIMIRNNLSRSSSPAAPPTTNHSSTVDYFSIKPKLSLDTNSQSDSNSTQSNNNEDTHSEQSDYNSYTHNQYYDSDDDEDDFDIRDQLLDPFDKITLSNCNEEYYSPLTPFDGQTTSPQDSIISSKSSNKSTTVVPSPQFQLTLPKLTTYSFLIVDDNIINLKILNRILLKLFPKCHIVQIQDSKLVKDLLHKQSFDSIFIDIEMPDVNGIDIAQFVRQDTKFDNMGMVAVTTRNSTQDLELFKQCGIDFTFHKPLNYSLDFMANSIDDIIITRKNKI</sequence>
<accession>C4YM07</accession>
<protein>
    <recommendedName>
        <fullName>Stress response regulator protein 1</fullName>
    </recommendedName>
</protein>
<name>SRR1_CANAW</name>
<keyword id="KW-0597">Phosphoprotein</keyword>
<gene>
    <name type="primary">SRR1</name>
    <name type="ORF">CAWG_01882</name>
</gene>